<evidence type="ECO:0000255" key="1"/>
<evidence type="ECO:0000269" key="2">
    <source>
    </source>
</evidence>
<evidence type="ECO:0000269" key="3">
    <source>
    </source>
</evidence>
<evidence type="ECO:0000269" key="4">
    <source>
    </source>
</evidence>
<evidence type="ECO:0000269" key="5">
    <source>
    </source>
</evidence>
<evidence type="ECO:0000269" key="6">
    <source>
    </source>
</evidence>
<evidence type="ECO:0000269" key="7">
    <source>
    </source>
</evidence>
<evidence type="ECO:0000303" key="8">
    <source>
    </source>
</evidence>
<evidence type="ECO:0000303" key="9">
    <source>
    </source>
</evidence>
<evidence type="ECO:0000305" key="10"/>
<evidence type="ECO:0000305" key="11">
    <source>
    </source>
</evidence>
<evidence type="ECO:0000312" key="12">
    <source>
        <dbReference type="Araport" id="AT2G44810"/>
    </source>
</evidence>
<dbReference type="EC" id="3.1.1.32" evidence="2 5"/>
<dbReference type="EMBL" id="AB060156">
    <property type="protein sequence ID" value="BAB69954.1"/>
    <property type="molecule type" value="Genomic_DNA"/>
</dbReference>
<dbReference type="EMBL" id="AC002388">
    <property type="protein sequence ID" value="AAC31843.1"/>
    <property type="status" value="ALT_INIT"/>
    <property type="molecule type" value="Genomic_DNA"/>
</dbReference>
<dbReference type="EMBL" id="AC003672">
    <property type="protein sequence ID" value="AAM14879.1"/>
    <property type="status" value="ALT_INIT"/>
    <property type="molecule type" value="Genomic_DNA"/>
</dbReference>
<dbReference type="EMBL" id="CP002685">
    <property type="protein sequence ID" value="AEC10469.1"/>
    <property type="status" value="ALT_INIT"/>
    <property type="molecule type" value="Genomic_DNA"/>
</dbReference>
<dbReference type="EMBL" id="CP002685">
    <property type="protein sequence ID" value="ANM62456.1"/>
    <property type="molecule type" value="Genomic_DNA"/>
</dbReference>
<dbReference type="EMBL" id="AY074633">
    <property type="protein sequence ID" value="AAL69449.1"/>
    <property type="status" value="ALT_INIT"/>
    <property type="molecule type" value="mRNA"/>
</dbReference>
<dbReference type="PIR" id="T00412">
    <property type="entry name" value="T01607"/>
</dbReference>
<dbReference type="RefSeq" id="NP_001324613.1">
    <property type="nucleotide sequence ID" value="NM_001337097.1"/>
</dbReference>
<dbReference type="RefSeq" id="NP_182008.1">
    <property type="nucleotide sequence ID" value="NM_130045.4"/>
</dbReference>
<dbReference type="SMR" id="Q948R1"/>
<dbReference type="FunCoup" id="Q948R1">
    <property type="interactions" value="70"/>
</dbReference>
<dbReference type="STRING" id="3702.Q948R1"/>
<dbReference type="SwissLipids" id="SLP:000001795"/>
<dbReference type="ESTHER" id="arath-PLA11">
    <property type="family name" value="Plant_phospholipase"/>
</dbReference>
<dbReference type="GlyGen" id="Q948R1">
    <property type="glycosylation" value="1 site"/>
</dbReference>
<dbReference type="PaxDb" id="3702-AT2G44810.1"/>
<dbReference type="EnsemblPlants" id="AT2G44810.2">
    <property type="protein sequence ID" value="AT2G44810.2"/>
    <property type="gene ID" value="AT2G44810"/>
</dbReference>
<dbReference type="GeneID" id="819090"/>
<dbReference type="Gramene" id="AT2G44810.2">
    <property type="protein sequence ID" value="AT2G44810.2"/>
    <property type="gene ID" value="AT2G44810"/>
</dbReference>
<dbReference type="KEGG" id="ath:AT2G44810"/>
<dbReference type="Araport" id="AT2G44810"/>
<dbReference type="TAIR" id="AT2G44810">
    <property type="gene designation" value="DAD1"/>
</dbReference>
<dbReference type="eggNOG" id="KOG4569">
    <property type="taxonomic scope" value="Eukaryota"/>
</dbReference>
<dbReference type="HOGENOM" id="CLU_018841_2_0_1"/>
<dbReference type="InParanoid" id="Q948R1"/>
<dbReference type="PhylomeDB" id="Q948R1"/>
<dbReference type="BioCyc" id="MetaCyc:AT2G44810-MONOMER"/>
<dbReference type="BRENDA" id="3.1.1.32">
    <property type="organism ID" value="399"/>
</dbReference>
<dbReference type="PRO" id="PR:Q948R1"/>
<dbReference type="Proteomes" id="UP000006548">
    <property type="component" value="Chromosome 2"/>
</dbReference>
<dbReference type="ExpressionAtlas" id="Q948R1">
    <property type="expression patterns" value="baseline and differential"/>
</dbReference>
<dbReference type="GO" id="GO:0009507">
    <property type="term" value="C:chloroplast"/>
    <property type="evidence" value="ECO:0007669"/>
    <property type="project" value="UniProtKB-SubCell"/>
</dbReference>
<dbReference type="GO" id="GO:0047714">
    <property type="term" value="F:galactolipase activity"/>
    <property type="evidence" value="ECO:0007669"/>
    <property type="project" value="UniProtKB-ARBA"/>
</dbReference>
<dbReference type="GO" id="GO:0008970">
    <property type="term" value="F:phospholipase A1 activity"/>
    <property type="evidence" value="ECO:0007669"/>
    <property type="project" value="UniProtKB-EC"/>
</dbReference>
<dbReference type="GO" id="GO:0016042">
    <property type="term" value="P:lipid catabolic process"/>
    <property type="evidence" value="ECO:0007669"/>
    <property type="project" value="UniProtKB-KW"/>
</dbReference>
<dbReference type="CDD" id="cd00519">
    <property type="entry name" value="Lipase_3"/>
    <property type="match status" value="1"/>
</dbReference>
<dbReference type="Gene3D" id="3.40.50.1820">
    <property type="entry name" value="alpha/beta hydrolase"/>
    <property type="match status" value="1"/>
</dbReference>
<dbReference type="InterPro" id="IPR029058">
    <property type="entry name" value="AB_hydrolase_fold"/>
</dbReference>
<dbReference type="InterPro" id="IPR002921">
    <property type="entry name" value="Fungal_lipase-type"/>
</dbReference>
<dbReference type="PANTHER" id="PTHR31403:SF54">
    <property type="entry name" value="PHOSPHOLIPASE A(1) DAD1, CHLOROPLASTIC"/>
    <property type="match status" value="1"/>
</dbReference>
<dbReference type="PANTHER" id="PTHR31403">
    <property type="entry name" value="PHOSPHOLIPASE A1-IBETA2, CHLOROPLASTIC"/>
    <property type="match status" value="1"/>
</dbReference>
<dbReference type="Pfam" id="PF01764">
    <property type="entry name" value="Lipase_3"/>
    <property type="match status" value="1"/>
</dbReference>
<dbReference type="SUPFAM" id="SSF53474">
    <property type="entry name" value="alpha/beta-Hydrolases"/>
    <property type="match status" value="1"/>
</dbReference>
<dbReference type="PROSITE" id="PS00120">
    <property type="entry name" value="LIPASE_SER"/>
    <property type="match status" value="1"/>
</dbReference>
<proteinExistence type="evidence at protein level"/>
<protein>
    <recommendedName>
        <fullName evidence="10">Phospholipase A(1) DAD1, chloroplastic</fullName>
        <ecNumber evidence="2 5">3.1.1.32</ecNumber>
    </recommendedName>
    <alternativeName>
        <fullName evidence="9">Phospholipase A1-Ibeta1</fullName>
    </alternativeName>
    <alternativeName>
        <fullName evidence="8">Protein DEFECTIVE IN ANTHER DEHISCENCE 1</fullName>
        <shortName evidence="8">AtDAD1</shortName>
    </alternativeName>
</protein>
<keyword id="KW-0150">Chloroplast</keyword>
<keyword id="KW-0378">Hydrolase</keyword>
<keyword id="KW-0442">Lipid degradation</keyword>
<keyword id="KW-0443">Lipid metabolism</keyword>
<keyword id="KW-0934">Plastid</keyword>
<keyword id="KW-1185">Reference proteome</keyword>
<keyword id="KW-0809">Transit peptide</keyword>
<reference key="1">
    <citation type="journal article" date="2001" name="Plant Cell">
        <title>The DEFECTIVE IN ANTHER DEHISCIENCE gene encodes a novel phospholipase A1 catalyzing the initial step of jasmonic acid biosynthesis, which synchronizes pollen maturation, anther dehiscence, and flower opening in Arabidopsis.</title>
        <authorList>
            <person name="Ishiguro S."/>
            <person name="Kawai-Oda A."/>
            <person name="Ueda J."/>
            <person name="Nishida I."/>
            <person name="Okada K."/>
        </authorList>
    </citation>
    <scope>NUCLEOTIDE SEQUENCE [GENOMIC DNA]</scope>
    <scope>FUNCTION</scope>
    <scope>CATALYTIC ACTIVITY</scope>
    <scope>BIOPHYSICOCHEMICAL PROPERTIES</scope>
    <scope>TISSUE SPECIFICITY</scope>
    <scope>SUBCELLULAR LOCATION</scope>
    <scope>INDUCTION BY WOUNDING</scope>
    <scope>DISRUPTION PHENOTYPE</scope>
    <source>
        <strain>cv. Wassilewskija</strain>
    </source>
</reference>
<reference key="2">
    <citation type="journal article" date="1999" name="Nature">
        <title>Sequence and analysis of chromosome 2 of the plant Arabidopsis thaliana.</title>
        <authorList>
            <person name="Lin X."/>
            <person name="Kaul S."/>
            <person name="Rounsley S.D."/>
            <person name="Shea T.P."/>
            <person name="Benito M.-I."/>
            <person name="Town C.D."/>
            <person name="Fujii C.Y."/>
            <person name="Mason T.M."/>
            <person name="Bowman C.L."/>
            <person name="Barnstead M.E."/>
            <person name="Feldblyum T.V."/>
            <person name="Buell C.R."/>
            <person name="Ketchum K.A."/>
            <person name="Lee J.J."/>
            <person name="Ronning C.M."/>
            <person name="Koo H.L."/>
            <person name="Moffat K.S."/>
            <person name="Cronin L.A."/>
            <person name="Shen M."/>
            <person name="Pai G."/>
            <person name="Van Aken S."/>
            <person name="Umayam L."/>
            <person name="Tallon L.J."/>
            <person name="Gill J.E."/>
            <person name="Adams M.D."/>
            <person name="Carrera A.J."/>
            <person name="Creasy T.H."/>
            <person name="Goodman H.M."/>
            <person name="Somerville C.R."/>
            <person name="Copenhaver G.P."/>
            <person name="Preuss D."/>
            <person name="Nierman W.C."/>
            <person name="White O."/>
            <person name="Eisen J.A."/>
            <person name="Salzberg S.L."/>
            <person name="Fraser C.M."/>
            <person name="Venter J.C."/>
        </authorList>
    </citation>
    <scope>NUCLEOTIDE SEQUENCE [LARGE SCALE GENOMIC DNA]</scope>
    <source>
        <strain>cv. Columbia</strain>
    </source>
</reference>
<reference key="3">
    <citation type="journal article" date="2017" name="Plant J.">
        <title>Araport11: a complete reannotation of the Arabidopsis thaliana reference genome.</title>
        <authorList>
            <person name="Cheng C.Y."/>
            <person name="Krishnakumar V."/>
            <person name="Chan A.P."/>
            <person name="Thibaud-Nissen F."/>
            <person name="Schobel S."/>
            <person name="Town C.D."/>
        </authorList>
    </citation>
    <scope>GENOME REANNOTATION</scope>
    <source>
        <strain>cv. Columbia</strain>
    </source>
</reference>
<reference key="4">
    <citation type="journal article" date="2003" name="Science">
        <title>Empirical analysis of transcriptional activity in the Arabidopsis genome.</title>
        <authorList>
            <person name="Yamada K."/>
            <person name="Lim J."/>
            <person name="Dale J.M."/>
            <person name="Chen H."/>
            <person name="Shinn P."/>
            <person name="Palm C.J."/>
            <person name="Southwick A.M."/>
            <person name="Wu H.C."/>
            <person name="Kim C.J."/>
            <person name="Nguyen M."/>
            <person name="Pham P.K."/>
            <person name="Cheuk R.F."/>
            <person name="Karlin-Newmann G."/>
            <person name="Liu S.X."/>
            <person name="Lam B."/>
            <person name="Sakano H."/>
            <person name="Wu T."/>
            <person name="Yu G."/>
            <person name="Miranda M."/>
            <person name="Quach H.L."/>
            <person name="Tripp M."/>
            <person name="Chang C.H."/>
            <person name="Lee J.M."/>
            <person name="Toriumi M.J."/>
            <person name="Chan M.M."/>
            <person name="Tang C.C."/>
            <person name="Onodera C.S."/>
            <person name="Deng J.M."/>
            <person name="Akiyama K."/>
            <person name="Ansari Y."/>
            <person name="Arakawa T."/>
            <person name="Banh J."/>
            <person name="Banno F."/>
            <person name="Bowser L."/>
            <person name="Brooks S.Y."/>
            <person name="Carninci P."/>
            <person name="Chao Q."/>
            <person name="Choy N."/>
            <person name="Enju A."/>
            <person name="Goldsmith A.D."/>
            <person name="Gurjal M."/>
            <person name="Hansen N.F."/>
            <person name="Hayashizaki Y."/>
            <person name="Johnson-Hopson C."/>
            <person name="Hsuan V.W."/>
            <person name="Iida K."/>
            <person name="Karnes M."/>
            <person name="Khan S."/>
            <person name="Koesema E."/>
            <person name="Ishida J."/>
            <person name="Jiang P.X."/>
            <person name="Jones T."/>
            <person name="Kawai J."/>
            <person name="Kamiya A."/>
            <person name="Meyers C."/>
            <person name="Nakajima M."/>
            <person name="Narusaka M."/>
            <person name="Seki M."/>
            <person name="Sakurai T."/>
            <person name="Satou M."/>
            <person name="Tamse R."/>
            <person name="Vaysberg M."/>
            <person name="Wallender E.K."/>
            <person name="Wong C."/>
            <person name="Yamamura Y."/>
            <person name="Yuan S."/>
            <person name="Shinozaki K."/>
            <person name="Davis R.W."/>
            <person name="Theologis A."/>
            <person name="Ecker J.R."/>
        </authorList>
    </citation>
    <scope>NUCLEOTIDE SEQUENCE [LARGE SCALE MRNA] OF 77-447</scope>
    <source>
        <strain>cv. Columbia</strain>
    </source>
</reference>
<reference key="5">
    <citation type="journal article" date="2004" name="Trends Plant Sci.">
        <title>Phospholipid-derived signaling mediated by phospholipase A in plants.</title>
        <authorList>
            <person name="Ryu S.B."/>
        </authorList>
    </citation>
    <scope>GENE FAMILY</scope>
    <scope>NOMENCLATURE</scope>
</reference>
<reference key="6">
    <citation type="journal article" date="2007" name="Plant Cell">
        <title>The homeotic protein AGAMOUS controls late stamen development by regulating a jasmonate biosynthetic gene in Arabidopsis.</title>
        <authorList>
            <person name="Ito T."/>
            <person name="Ng K.H."/>
            <person name="Lim T.S."/>
            <person name="Yu H."/>
            <person name="Meyerowitz E.M."/>
        </authorList>
    </citation>
    <scope>REGULATION</scope>
</reference>
<reference key="7">
    <citation type="journal article" date="2008" name="Dev. Cell">
        <title>Cooperation and functional diversification of two closely related galactolipase genes for jasmonate biosynthesis.</title>
        <authorList>
            <person name="Hyun Y."/>
            <person name="Choi S."/>
            <person name="Hwang H.J."/>
            <person name="Yu J."/>
            <person name="Nam S.J."/>
            <person name="Ko J."/>
            <person name="Park J.Y."/>
            <person name="Seo Y.S."/>
            <person name="Kim E.Y."/>
            <person name="Ryu S.B."/>
            <person name="Kim W.T."/>
            <person name="Lee Y.H."/>
            <person name="Kang H."/>
            <person name="Lee I."/>
        </authorList>
    </citation>
    <scope>FUNCTION</scope>
    <scope>SUBCELLULAR LOCATION</scope>
    <scope>TISSUE SPECIFICITY</scope>
    <scope>INDUCTION BY WOUNDING</scope>
</reference>
<reference key="8">
    <citation type="journal article" date="2009" name="FEBS Lett.">
        <title>Enzymatic characterization of class I DAD1-like acylhydrolase members targeted to chloroplast in Arabidopsis.</title>
        <authorList>
            <person name="Seo Y.S."/>
            <person name="Kim E.Y."/>
            <person name="Kim J.H."/>
            <person name="Kim W.T."/>
        </authorList>
    </citation>
    <scope>CATALYTIC ACTIVITY</scope>
    <scope>SUBCELLULAR LOCATION</scope>
    <scope>TISSUE SPECIFICITY</scope>
</reference>
<reference key="9">
    <citation type="journal article" date="2010" name="Plant Physiol.">
        <title>DONGLE and DEFECTIVE IN ANTHER DEHISCENCE1 lipases are not essential for wound- and pathogen-induced jasmonate biosynthesis: redundant lipases contribute to jasmonate formation.</title>
        <authorList>
            <person name="Ellinger D."/>
            <person name="Stingl N."/>
            <person name="Kubigsteltig I.I."/>
            <person name="Bals T."/>
            <person name="Juenger M."/>
            <person name="Pollmann S."/>
            <person name="Berger S."/>
            <person name="Schuenemann D."/>
            <person name="Mueller M.J."/>
        </authorList>
    </citation>
    <scope>FUNCTION</scope>
    <scope>INDUCTION BY WOUNDING</scope>
</reference>
<reference key="10">
    <citation type="journal article" date="2014" name="Plant Cell Rep.">
        <title>Wound-induced expression of DEFECTIVE IN ANTHER DEHISCENCE1 and DAD1-like lipase genes is mediated by both CORONATINE INSENSITIVE1-dependent and independent pathways in Arabidopsis thaliana.</title>
        <authorList>
            <person name="Rudus I."/>
            <person name="Terai H."/>
            <person name="Shimizu T."/>
            <person name="Kojima H."/>
            <person name="Hattori K."/>
            <person name="Nishimori Y."/>
            <person name="Tsukagoshi H."/>
            <person name="Kamiya Y."/>
            <person name="Seo M."/>
            <person name="Nakamura K."/>
            <person name="Kepczynski J."/>
            <person name="Ishiguro S."/>
        </authorList>
    </citation>
    <scope>INDUCTION</scope>
</reference>
<gene>
    <name evidence="8" type="primary">DAD1</name>
    <name evidence="12" type="ordered locus">At2g44810</name>
    <name evidence="12" type="ORF">T13E15.18</name>
</gene>
<name>PLA11_ARATH</name>
<accession>Q948R1</accession>
<accession>F4IV22</accession>
<accession>O22170</accession>
<feature type="transit peptide" description="Chloroplast" evidence="1">
    <location>
        <begin position="1"/>
        <end position="46"/>
    </location>
</feature>
<feature type="chain" id="PRO_0000398875" description="Phospholipase A(1) DAD1, chloroplastic">
    <location>
        <begin position="47"/>
        <end position="447"/>
    </location>
</feature>
<feature type="short sequence motif" description="GXSXG" evidence="11">
    <location>
        <begin position="293"/>
        <end position="297"/>
    </location>
</feature>
<feature type="active site" description="Acyl-ester intermediate" evidence="11">
    <location>
        <position position="295"/>
    </location>
</feature>
<feature type="active site" description="Charge relay system" evidence="11">
    <location>
        <position position="352"/>
    </location>
</feature>
<feature type="active site" description="Charge relay system" evidence="11">
    <location>
        <position position="418"/>
    </location>
</feature>
<organism>
    <name type="scientific">Arabidopsis thaliana</name>
    <name type="common">Mouse-ear cress</name>
    <dbReference type="NCBI Taxonomy" id="3702"/>
    <lineage>
        <taxon>Eukaryota</taxon>
        <taxon>Viridiplantae</taxon>
        <taxon>Streptophyta</taxon>
        <taxon>Embryophyta</taxon>
        <taxon>Tracheophyta</taxon>
        <taxon>Spermatophyta</taxon>
        <taxon>Magnoliopsida</taxon>
        <taxon>eudicotyledons</taxon>
        <taxon>Gunneridae</taxon>
        <taxon>Pentapetalae</taxon>
        <taxon>rosids</taxon>
        <taxon>malvids</taxon>
        <taxon>Brassicales</taxon>
        <taxon>Brassicaceae</taxon>
        <taxon>Camelineae</taxon>
        <taxon>Arabidopsis</taxon>
    </lineage>
</organism>
<sequence length="447" mass="49960">MRFSLSPVRPHSVVVPSLPKQDVVSYISGTTSNRQCRCVLTLPSPSVSTSRPPVLPKPETWESLLLNHDQIPGEFSPTGSSIPVKLGRRWMEYQGLQNWDGLLDPLDDNLRREILRYGQFVESAYQAFDFDPSSPTYGTCRFPRSTLLERSGLPNSGYRLTKNLRATSGINLPRWIEKAPSWMATQSSWIGYVAVCQDKEEISRLGRRDVVISFRGTATCLEWLENLRATLTHLPNGPTGANLNGSNSGPMVESGFLSLYTSGVHSLRDMVREEIARLLQSYGDEPLSVTITGHSLGAAIATLAAYDIKTTFKRAPMVTVISFGGPRVGNRCFRKLLEKQGTKVLRIVNSDDVITKVPGVVLENREQDNVKMTASIMPSWIQRRVEETPWVYAEIGKELRLSSRDSPHLSSINVATCHELKTYLHLVDGFVSSTCPFRETARRVLHR</sequence>
<comment type="function">
    <text evidence="2 4 6">Sn-1-specific phospholipase that releases free fatty acids from phospholipids. Low activity on galactolipids and triacylglycerols. Catalyzes the initial step of jasmonic acid biosynthesis. Not essential for jasmonate biosynthesis after wounding or upon pathogen infection.</text>
</comment>
<comment type="catalytic activity">
    <reaction evidence="2 5">
        <text>a 1,2-diacyl-sn-glycero-3-phosphocholine + H2O = a 2-acyl-sn-glycero-3-phosphocholine + a fatty acid + H(+)</text>
        <dbReference type="Rhea" id="RHEA:18689"/>
        <dbReference type="ChEBI" id="CHEBI:15377"/>
        <dbReference type="ChEBI" id="CHEBI:15378"/>
        <dbReference type="ChEBI" id="CHEBI:28868"/>
        <dbReference type="ChEBI" id="CHEBI:57643"/>
        <dbReference type="ChEBI" id="CHEBI:57875"/>
        <dbReference type="EC" id="3.1.1.32"/>
    </reaction>
    <physiologicalReaction direction="left-to-right" evidence="2 5">
        <dbReference type="Rhea" id="RHEA:18690"/>
    </physiologicalReaction>
</comment>
<comment type="catalytic activity">
    <reaction evidence="2">
        <text>1-hexadecanoyl-2-(9Z,12Z-octadecadienoyl)-sn-glycero-3-phosphocholine + H2O = 2-(9Z,12Z-octadecadienoyl)-sn-glycero-3-phosphocholine + hexadecanoate + H(+)</text>
        <dbReference type="Rhea" id="RHEA:40971"/>
        <dbReference type="ChEBI" id="CHEBI:7896"/>
        <dbReference type="ChEBI" id="CHEBI:15377"/>
        <dbReference type="ChEBI" id="CHEBI:15378"/>
        <dbReference type="ChEBI" id="CHEBI:73002"/>
        <dbReference type="ChEBI" id="CHEBI:76084"/>
    </reaction>
    <physiologicalReaction direction="left-to-right" evidence="2">
        <dbReference type="Rhea" id="RHEA:40972"/>
    </physiologicalReaction>
</comment>
<comment type="biophysicochemical properties">
    <phDependence>
        <text evidence="2">Optimum pH is 6.0-6.5.</text>
    </phDependence>
</comment>
<comment type="subcellular location">
    <subcellularLocation>
        <location evidence="2 4 5">Plastid</location>
        <location evidence="2 4 5">Chloroplast</location>
    </subcellularLocation>
</comment>
<comment type="tissue specificity">
    <text evidence="2 4 5">Expressed in flower buds, but not in leaves or roots. Restricted to the stamen filaments immediately before flower opening.</text>
</comment>
<comment type="induction">
    <text evidence="2 4 6 7">Induced by wounding (PubMed:11595796, PubMed:18267087, PubMed:20348210, PubMed:24430866). Induced by methyl jasmonate (PubMed:24430866).</text>
</comment>
<comment type="disruption phenotype">
    <text evidence="2">Defective in anther dehiscence and pollen maturation. Delayed flower buds opening.</text>
</comment>
<comment type="miscellaneous">
    <text evidence="3">Directly regulated at the transcription level by the floral homeotic gene AGAMOUS.</text>
</comment>
<comment type="similarity">
    <text evidence="10">Belongs to the AB hydrolase superfamily. Lipase family.</text>
</comment>
<comment type="sequence caution" evidence="10">
    <conflict type="erroneous initiation">
        <sequence resource="EMBL-CDS" id="AAC31843"/>
    </conflict>
    <text>Truncated N-terminus.</text>
</comment>
<comment type="sequence caution" evidence="10">
    <conflict type="erroneous initiation">
        <sequence resource="EMBL-CDS" id="AAL69449"/>
    </conflict>
    <text>Truncated N-terminus.</text>
</comment>
<comment type="sequence caution" evidence="10">
    <conflict type="erroneous initiation">
        <sequence resource="EMBL-CDS" id="AAM14879"/>
    </conflict>
    <text>Truncated N-terminus.</text>
</comment>
<comment type="sequence caution" evidence="10">
    <conflict type="erroneous initiation">
        <sequence resource="EMBL-CDS" id="AEC10469"/>
    </conflict>
    <text>Truncated N-terminus.</text>
</comment>